<dbReference type="EC" id="3.6.5.3" evidence="2"/>
<dbReference type="EMBL" id="CR954199">
    <property type="protein sequence ID" value="CAL36350.1"/>
    <property type="molecule type" value="Genomic_DNA"/>
</dbReference>
<dbReference type="RefSeq" id="YP_717228.1">
    <property type="nucleotide sequence ID" value="NC_008289.1"/>
</dbReference>
<dbReference type="SMR" id="Q0P3M7"/>
<dbReference type="FunCoup" id="Q0P3M7">
    <property type="interactions" value="1167"/>
</dbReference>
<dbReference type="STRING" id="70448.Q0P3M7"/>
<dbReference type="GeneID" id="4238857"/>
<dbReference type="KEGG" id="ota:OstapCp25"/>
<dbReference type="eggNOG" id="KOG0460">
    <property type="taxonomic scope" value="Eukaryota"/>
</dbReference>
<dbReference type="InParanoid" id="Q0P3M7"/>
<dbReference type="Proteomes" id="UP000009170">
    <property type="component" value="Chloroplast"/>
</dbReference>
<dbReference type="GO" id="GO:0009507">
    <property type="term" value="C:chloroplast"/>
    <property type="evidence" value="ECO:0007669"/>
    <property type="project" value="UniProtKB-SubCell"/>
</dbReference>
<dbReference type="GO" id="GO:0005739">
    <property type="term" value="C:mitochondrion"/>
    <property type="evidence" value="ECO:0007669"/>
    <property type="project" value="TreeGrafter"/>
</dbReference>
<dbReference type="GO" id="GO:0005525">
    <property type="term" value="F:GTP binding"/>
    <property type="evidence" value="ECO:0007669"/>
    <property type="project" value="UniProtKB-UniRule"/>
</dbReference>
<dbReference type="GO" id="GO:0003924">
    <property type="term" value="F:GTPase activity"/>
    <property type="evidence" value="ECO:0007669"/>
    <property type="project" value="InterPro"/>
</dbReference>
<dbReference type="GO" id="GO:0003746">
    <property type="term" value="F:translation elongation factor activity"/>
    <property type="evidence" value="ECO:0007669"/>
    <property type="project" value="UniProtKB-UniRule"/>
</dbReference>
<dbReference type="GO" id="GO:0070125">
    <property type="term" value="P:mitochondrial translational elongation"/>
    <property type="evidence" value="ECO:0007669"/>
    <property type="project" value="TreeGrafter"/>
</dbReference>
<dbReference type="CDD" id="cd01884">
    <property type="entry name" value="EF_Tu"/>
    <property type="match status" value="1"/>
</dbReference>
<dbReference type="CDD" id="cd03697">
    <property type="entry name" value="EFTU_II"/>
    <property type="match status" value="1"/>
</dbReference>
<dbReference type="CDD" id="cd03707">
    <property type="entry name" value="EFTU_III"/>
    <property type="match status" value="1"/>
</dbReference>
<dbReference type="FunFam" id="2.40.30.10:FF:000001">
    <property type="entry name" value="Elongation factor Tu"/>
    <property type="match status" value="1"/>
</dbReference>
<dbReference type="FunFam" id="2.40.30.10:FF:000046">
    <property type="entry name" value="Elongation factor Tu"/>
    <property type="match status" value="1"/>
</dbReference>
<dbReference type="FunFam" id="3.40.50.300:FF:000003">
    <property type="entry name" value="Elongation factor Tu"/>
    <property type="match status" value="1"/>
</dbReference>
<dbReference type="Gene3D" id="3.40.50.300">
    <property type="entry name" value="P-loop containing nucleotide triphosphate hydrolases"/>
    <property type="match status" value="1"/>
</dbReference>
<dbReference type="Gene3D" id="2.40.30.10">
    <property type="entry name" value="Translation factors"/>
    <property type="match status" value="2"/>
</dbReference>
<dbReference type="HAMAP" id="MF_00118_B">
    <property type="entry name" value="EF_Tu_B"/>
    <property type="match status" value="1"/>
</dbReference>
<dbReference type="InterPro" id="IPR041709">
    <property type="entry name" value="EF-Tu_GTP-bd"/>
</dbReference>
<dbReference type="InterPro" id="IPR050055">
    <property type="entry name" value="EF-Tu_GTPase"/>
</dbReference>
<dbReference type="InterPro" id="IPR004161">
    <property type="entry name" value="EFTu-like_2"/>
</dbReference>
<dbReference type="InterPro" id="IPR033720">
    <property type="entry name" value="EFTU_2"/>
</dbReference>
<dbReference type="InterPro" id="IPR031157">
    <property type="entry name" value="G_TR_CS"/>
</dbReference>
<dbReference type="InterPro" id="IPR027417">
    <property type="entry name" value="P-loop_NTPase"/>
</dbReference>
<dbReference type="InterPro" id="IPR005225">
    <property type="entry name" value="Small_GTP-bd"/>
</dbReference>
<dbReference type="InterPro" id="IPR000795">
    <property type="entry name" value="T_Tr_GTP-bd_dom"/>
</dbReference>
<dbReference type="InterPro" id="IPR009000">
    <property type="entry name" value="Transl_B-barrel_sf"/>
</dbReference>
<dbReference type="InterPro" id="IPR009001">
    <property type="entry name" value="Transl_elong_EF1A/Init_IF2_C"/>
</dbReference>
<dbReference type="InterPro" id="IPR004541">
    <property type="entry name" value="Transl_elong_EFTu/EF1A_bac/org"/>
</dbReference>
<dbReference type="InterPro" id="IPR004160">
    <property type="entry name" value="Transl_elong_EFTu/EF1A_C"/>
</dbReference>
<dbReference type="NCBIfam" id="TIGR00485">
    <property type="entry name" value="EF-Tu"/>
    <property type="match status" value="1"/>
</dbReference>
<dbReference type="NCBIfam" id="NF000766">
    <property type="entry name" value="PRK00049.1"/>
    <property type="match status" value="1"/>
</dbReference>
<dbReference type="NCBIfam" id="NF009372">
    <property type="entry name" value="PRK12735.1"/>
    <property type="match status" value="1"/>
</dbReference>
<dbReference type="NCBIfam" id="NF009373">
    <property type="entry name" value="PRK12736.1"/>
    <property type="match status" value="1"/>
</dbReference>
<dbReference type="NCBIfam" id="TIGR00231">
    <property type="entry name" value="small_GTP"/>
    <property type="match status" value="1"/>
</dbReference>
<dbReference type="PANTHER" id="PTHR43721:SF5">
    <property type="entry name" value="ELONGATION FACTOR TU, CHLOROPLASTIC"/>
    <property type="match status" value="1"/>
</dbReference>
<dbReference type="PANTHER" id="PTHR43721">
    <property type="entry name" value="ELONGATION FACTOR TU-RELATED"/>
    <property type="match status" value="1"/>
</dbReference>
<dbReference type="Pfam" id="PF00009">
    <property type="entry name" value="GTP_EFTU"/>
    <property type="match status" value="1"/>
</dbReference>
<dbReference type="Pfam" id="PF03144">
    <property type="entry name" value="GTP_EFTU_D2"/>
    <property type="match status" value="1"/>
</dbReference>
<dbReference type="Pfam" id="PF03143">
    <property type="entry name" value="GTP_EFTU_D3"/>
    <property type="match status" value="1"/>
</dbReference>
<dbReference type="PRINTS" id="PR00315">
    <property type="entry name" value="ELONGATNFCT"/>
</dbReference>
<dbReference type="SUPFAM" id="SSF50465">
    <property type="entry name" value="EF-Tu/eEF-1alpha/eIF2-gamma C-terminal domain"/>
    <property type="match status" value="1"/>
</dbReference>
<dbReference type="SUPFAM" id="SSF52540">
    <property type="entry name" value="P-loop containing nucleoside triphosphate hydrolases"/>
    <property type="match status" value="1"/>
</dbReference>
<dbReference type="SUPFAM" id="SSF50447">
    <property type="entry name" value="Translation proteins"/>
    <property type="match status" value="1"/>
</dbReference>
<dbReference type="PROSITE" id="PS00301">
    <property type="entry name" value="G_TR_1"/>
    <property type="match status" value="1"/>
</dbReference>
<dbReference type="PROSITE" id="PS51722">
    <property type="entry name" value="G_TR_2"/>
    <property type="match status" value="1"/>
</dbReference>
<feature type="chain" id="PRO_0000275378" description="Elongation factor Tu, chloroplastic">
    <location>
        <begin position="1"/>
        <end position="409"/>
    </location>
</feature>
<feature type="domain" description="tr-type G">
    <location>
        <begin position="10"/>
        <end position="214"/>
    </location>
</feature>
<feature type="region of interest" description="G1" evidence="1">
    <location>
        <begin position="19"/>
        <end position="26"/>
    </location>
</feature>
<feature type="region of interest" description="G2" evidence="1">
    <location>
        <begin position="60"/>
        <end position="64"/>
    </location>
</feature>
<feature type="region of interest" description="G3" evidence="1">
    <location>
        <begin position="81"/>
        <end position="84"/>
    </location>
</feature>
<feature type="region of interest" description="G4" evidence="1">
    <location>
        <begin position="136"/>
        <end position="139"/>
    </location>
</feature>
<feature type="region of interest" description="G5" evidence="1">
    <location>
        <begin position="174"/>
        <end position="176"/>
    </location>
</feature>
<feature type="binding site" evidence="1">
    <location>
        <begin position="19"/>
        <end position="26"/>
    </location>
    <ligand>
        <name>GTP</name>
        <dbReference type="ChEBI" id="CHEBI:37565"/>
    </ligand>
</feature>
<feature type="binding site" evidence="2">
    <location>
        <position position="26"/>
    </location>
    <ligand>
        <name>Mg(2+)</name>
        <dbReference type="ChEBI" id="CHEBI:18420"/>
    </ligand>
</feature>
<feature type="binding site" evidence="1">
    <location>
        <begin position="81"/>
        <end position="85"/>
    </location>
    <ligand>
        <name>GTP</name>
        <dbReference type="ChEBI" id="CHEBI:37565"/>
    </ligand>
</feature>
<feature type="binding site" evidence="1">
    <location>
        <begin position="136"/>
        <end position="139"/>
    </location>
    <ligand>
        <name>GTP</name>
        <dbReference type="ChEBI" id="CHEBI:37565"/>
    </ligand>
</feature>
<protein>
    <recommendedName>
        <fullName>Elongation factor Tu, chloroplastic</fullName>
        <shortName>EF-Tu</shortName>
        <ecNumber evidence="2">3.6.5.3</ecNumber>
    </recommendedName>
</protein>
<keyword id="KW-0150">Chloroplast</keyword>
<keyword id="KW-0251">Elongation factor</keyword>
<keyword id="KW-0342">GTP-binding</keyword>
<keyword id="KW-0378">Hydrolase</keyword>
<keyword id="KW-0460">Magnesium</keyword>
<keyword id="KW-0479">Metal-binding</keyword>
<keyword id="KW-0547">Nucleotide-binding</keyword>
<keyword id="KW-0934">Plastid</keyword>
<keyword id="KW-0648">Protein biosynthesis</keyword>
<keyword id="KW-1185">Reference proteome</keyword>
<comment type="function">
    <text evidence="2">GTP hydrolase that promotes the GTP-dependent binding of aminoacyl-tRNA to the A-site of ribosomes during protein biosynthesis.</text>
</comment>
<comment type="catalytic activity">
    <reaction evidence="2">
        <text>GTP + H2O = GDP + phosphate + H(+)</text>
        <dbReference type="Rhea" id="RHEA:19669"/>
        <dbReference type="ChEBI" id="CHEBI:15377"/>
        <dbReference type="ChEBI" id="CHEBI:15378"/>
        <dbReference type="ChEBI" id="CHEBI:37565"/>
        <dbReference type="ChEBI" id="CHEBI:43474"/>
        <dbReference type="ChEBI" id="CHEBI:58189"/>
        <dbReference type="EC" id="3.6.5.3"/>
    </reaction>
    <physiologicalReaction direction="left-to-right" evidence="2">
        <dbReference type="Rhea" id="RHEA:19670"/>
    </physiologicalReaction>
</comment>
<comment type="subcellular location">
    <subcellularLocation>
        <location>Plastid</location>
        <location>Chloroplast</location>
    </subcellularLocation>
</comment>
<comment type="similarity">
    <text evidence="3">Belongs to the TRAFAC class translation factor GTPase superfamily. Classic translation factor GTPase family. EF-Tu/EF-1A subfamily.</text>
</comment>
<proteinExistence type="inferred from homology"/>
<gene>
    <name type="primary">tufA</name>
    <name type="ordered locus">OtCpg00250</name>
</gene>
<accession>Q0P3M7</accession>
<geneLocation type="chloroplast"/>
<reference key="1">
    <citation type="journal article" date="2007" name="Mol. Biol. Evol.">
        <title>The complete chloroplast and mitochondrial DNA sequence of Ostreococcus tauri: organelle genomes of the smallest eukaryote are examples of compaction.</title>
        <authorList>
            <person name="Robbens S."/>
            <person name="Derelle E."/>
            <person name="Ferraz C."/>
            <person name="Wuyts J."/>
            <person name="Moreau H."/>
            <person name="Van de Peer Y."/>
        </authorList>
    </citation>
    <scope>NUCLEOTIDE SEQUENCE [LARGE SCALE GENOMIC DNA]</scope>
    <source>
        <strain>OTTH0595</strain>
    </source>
</reference>
<organism>
    <name type="scientific">Ostreococcus tauri</name>
    <dbReference type="NCBI Taxonomy" id="70448"/>
    <lineage>
        <taxon>Eukaryota</taxon>
        <taxon>Viridiplantae</taxon>
        <taxon>Chlorophyta</taxon>
        <taxon>Mamiellophyceae</taxon>
        <taxon>Mamiellales</taxon>
        <taxon>Bathycoccaceae</taxon>
        <taxon>Ostreococcus</taxon>
    </lineage>
</organism>
<sequence length="409" mass="44441">MAREKFERTKPHVNIGTIGHVDHGKTTLTAAITMAMAARGGSAGKKYDEIDSSPEEKARGITINTAHVEYETATRHYAHVDCPGHADYVKNMITGAAQMDGAILVVSGADGPMPQTKEHILLAKQVGVPNIVVFLNKEDQVDDEELLELVDMEIRETLSSYDFPGDEIPVIAGSALLALEALSSNPKIGDGEDKWVDKIFSLMDNVDSYIPTPARETDKTFLMAVEDVFSITGRGTVATGRVERGTVKVGASIEIIGYVDTRVATVTGLEMFQKTLEESVAGDNVGVLLRGIQKEDIERGMVLAQPGTITPHTKFEAQVYVLKKEEGGRHTPFFPGYRPQFYVRTTDVTGKIESFISDEGDEATMVMPGDRVKMVVELIQPIAIENGMRFAIREGGRTVGAGVVSSILK</sequence>
<evidence type="ECO:0000250" key="1"/>
<evidence type="ECO:0000255" key="2">
    <source>
        <dbReference type="HAMAP-Rule" id="MF_00118"/>
    </source>
</evidence>
<evidence type="ECO:0000305" key="3"/>
<name>EFTU_OSTTA</name>